<feature type="chain" id="PRO_0000256284" description="Chorismate synthase">
    <location>
        <begin position="1"/>
        <end position="357"/>
    </location>
</feature>
<feature type="binding site" evidence="1">
    <location>
        <position position="47"/>
    </location>
    <ligand>
        <name>NADP(+)</name>
        <dbReference type="ChEBI" id="CHEBI:58349"/>
    </ligand>
</feature>
<feature type="binding site" evidence="1">
    <location>
        <begin position="123"/>
        <end position="125"/>
    </location>
    <ligand>
        <name>FMN</name>
        <dbReference type="ChEBI" id="CHEBI:58210"/>
    </ligand>
</feature>
<feature type="binding site" evidence="1">
    <location>
        <position position="281"/>
    </location>
    <ligand>
        <name>FMN</name>
        <dbReference type="ChEBI" id="CHEBI:58210"/>
    </ligand>
</feature>
<feature type="binding site" evidence="1">
    <location>
        <begin position="296"/>
        <end position="300"/>
    </location>
    <ligand>
        <name>FMN</name>
        <dbReference type="ChEBI" id="CHEBI:58210"/>
    </ligand>
</feature>
<feature type="binding site" evidence="1">
    <location>
        <position position="324"/>
    </location>
    <ligand>
        <name>FMN</name>
        <dbReference type="ChEBI" id="CHEBI:58210"/>
    </ligand>
</feature>
<organism>
    <name type="scientific">Chlamydia trachomatis serovar A (strain ATCC VR-571B / DSM 19440 / HAR-13)</name>
    <dbReference type="NCBI Taxonomy" id="315277"/>
    <lineage>
        <taxon>Bacteria</taxon>
        <taxon>Pseudomonadati</taxon>
        <taxon>Chlamydiota</taxon>
        <taxon>Chlamydiia</taxon>
        <taxon>Chlamydiales</taxon>
        <taxon>Chlamydiaceae</taxon>
        <taxon>Chlamydia/Chlamydophila group</taxon>
        <taxon>Chlamydia</taxon>
    </lineage>
</organism>
<name>AROC_CHLTA</name>
<sequence>MHNQYGSIFSITTWGESHGPAIGVVIDGCPAGLSLSPEDFLPAMARRRPGQLHTSPRQEPDLVTILSGVYQNKTTGTPISLLIENKDVSSSSYEQLQHCYRPGHAQFAYEGKYGFADNRGGGRASARETASRVAAGVIAKKILLSQRIETLAFLSGFGTLESKNYPKLSDSLIQQVHTSPFYTLLPQEEIQNLLLLNPDDSFGGVVSFITSPLPIGLGEPVFGKLPALLAAAMMSIPAAKGFEIGAGFSSSQMTGSAYLDAFIADESGVSLQSNRCGGALGGISIGQPLEGRVAFKPTSSIKKPCSSVLKDGTPIAYRTPNQGRHDPCVAIRAVAVVEAMLDLTLVDLLLQHRCTQL</sequence>
<evidence type="ECO:0000255" key="1">
    <source>
        <dbReference type="HAMAP-Rule" id="MF_00300"/>
    </source>
</evidence>
<accession>Q3KLY8</accession>
<dbReference type="EC" id="4.2.3.5" evidence="1"/>
<dbReference type="EMBL" id="CP000051">
    <property type="protein sequence ID" value="AAX50634.1"/>
    <property type="molecule type" value="Genomic_DNA"/>
</dbReference>
<dbReference type="RefSeq" id="WP_009871721.1">
    <property type="nucleotide sequence ID" value="NC_007429.1"/>
</dbReference>
<dbReference type="SMR" id="Q3KLY8"/>
<dbReference type="KEGG" id="cta:CTA_0400"/>
<dbReference type="HOGENOM" id="CLU_034547_0_0_0"/>
<dbReference type="UniPathway" id="UPA00053">
    <property type="reaction ID" value="UER00090"/>
</dbReference>
<dbReference type="Proteomes" id="UP000002532">
    <property type="component" value="Chromosome"/>
</dbReference>
<dbReference type="GO" id="GO:0005829">
    <property type="term" value="C:cytosol"/>
    <property type="evidence" value="ECO:0007669"/>
    <property type="project" value="TreeGrafter"/>
</dbReference>
<dbReference type="GO" id="GO:0004107">
    <property type="term" value="F:chorismate synthase activity"/>
    <property type="evidence" value="ECO:0007669"/>
    <property type="project" value="UniProtKB-UniRule"/>
</dbReference>
<dbReference type="GO" id="GO:0010181">
    <property type="term" value="F:FMN binding"/>
    <property type="evidence" value="ECO:0007669"/>
    <property type="project" value="TreeGrafter"/>
</dbReference>
<dbReference type="GO" id="GO:0008652">
    <property type="term" value="P:amino acid biosynthetic process"/>
    <property type="evidence" value="ECO:0007669"/>
    <property type="project" value="UniProtKB-KW"/>
</dbReference>
<dbReference type="GO" id="GO:0009073">
    <property type="term" value="P:aromatic amino acid family biosynthetic process"/>
    <property type="evidence" value="ECO:0007669"/>
    <property type="project" value="UniProtKB-KW"/>
</dbReference>
<dbReference type="GO" id="GO:0009423">
    <property type="term" value="P:chorismate biosynthetic process"/>
    <property type="evidence" value="ECO:0007669"/>
    <property type="project" value="UniProtKB-UniRule"/>
</dbReference>
<dbReference type="CDD" id="cd07304">
    <property type="entry name" value="Chorismate_synthase"/>
    <property type="match status" value="1"/>
</dbReference>
<dbReference type="FunFam" id="3.60.150.10:FF:000002">
    <property type="entry name" value="Chorismate synthase"/>
    <property type="match status" value="1"/>
</dbReference>
<dbReference type="Gene3D" id="3.60.150.10">
    <property type="entry name" value="Chorismate synthase AroC"/>
    <property type="match status" value="1"/>
</dbReference>
<dbReference type="HAMAP" id="MF_00300">
    <property type="entry name" value="Chorismate_synth"/>
    <property type="match status" value="1"/>
</dbReference>
<dbReference type="InterPro" id="IPR000453">
    <property type="entry name" value="Chorismate_synth"/>
</dbReference>
<dbReference type="InterPro" id="IPR035904">
    <property type="entry name" value="Chorismate_synth_AroC_sf"/>
</dbReference>
<dbReference type="InterPro" id="IPR020541">
    <property type="entry name" value="Chorismate_synthase_CS"/>
</dbReference>
<dbReference type="NCBIfam" id="TIGR00033">
    <property type="entry name" value="aroC"/>
    <property type="match status" value="1"/>
</dbReference>
<dbReference type="NCBIfam" id="NF003793">
    <property type="entry name" value="PRK05382.1"/>
    <property type="match status" value="1"/>
</dbReference>
<dbReference type="PANTHER" id="PTHR21085">
    <property type="entry name" value="CHORISMATE SYNTHASE"/>
    <property type="match status" value="1"/>
</dbReference>
<dbReference type="PANTHER" id="PTHR21085:SF0">
    <property type="entry name" value="CHORISMATE SYNTHASE"/>
    <property type="match status" value="1"/>
</dbReference>
<dbReference type="Pfam" id="PF01264">
    <property type="entry name" value="Chorismate_synt"/>
    <property type="match status" value="1"/>
</dbReference>
<dbReference type="PIRSF" id="PIRSF001456">
    <property type="entry name" value="Chorismate_synth"/>
    <property type="match status" value="1"/>
</dbReference>
<dbReference type="SUPFAM" id="SSF103263">
    <property type="entry name" value="Chorismate synthase, AroC"/>
    <property type="match status" value="1"/>
</dbReference>
<dbReference type="PROSITE" id="PS00787">
    <property type="entry name" value="CHORISMATE_SYNTHASE_1"/>
    <property type="match status" value="1"/>
</dbReference>
<dbReference type="PROSITE" id="PS00788">
    <property type="entry name" value="CHORISMATE_SYNTHASE_2"/>
    <property type="match status" value="1"/>
</dbReference>
<dbReference type="PROSITE" id="PS00789">
    <property type="entry name" value="CHORISMATE_SYNTHASE_3"/>
    <property type="match status" value="1"/>
</dbReference>
<comment type="function">
    <text evidence="1">Catalyzes the anti-1,4-elimination of the C-3 phosphate and the C-6 proR hydrogen from 5-enolpyruvylshikimate-3-phosphate (EPSP) to yield chorismate, which is the branch point compound that serves as the starting substrate for the three terminal pathways of aromatic amino acid biosynthesis. This reaction introduces a second double bond into the aromatic ring system.</text>
</comment>
<comment type="catalytic activity">
    <reaction evidence="1">
        <text>5-O-(1-carboxyvinyl)-3-phosphoshikimate = chorismate + phosphate</text>
        <dbReference type="Rhea" id="RHEA:21020"/>
        <dbReference type="ChEBI" id="CHEBI:29748"/>
        <dbReference type="ChEBI" id="CHEBI:43474"/>
        <dbReference type="ChEBI" id="CHEBI:57701"/>
        <dbReference type="EC" id="4.2.3.5"/>
    </reaction>
</comment>
<comment type="cofactor">
    <cofactor evidence="1">
        <name>FMNH2</name>
        <dbReference type="ChEBI" id="CHEBI:57618"/>
    </cofactor>
    <text evidence="1">Reduced FMN (FMNH(2)).</text>
</comment>
<comment type="pathway">
    <text evidence="1">Metabolic intermediate biosynthesis; chorismate biosynthesis; chorismate from D-erythrose 4-phosphate and phosphoenolpyruvate: step 7/7.</text>
</comment>
<comment type="subunit">
    <text evidence="1">Homotetramer.</text>
</comment>
<comment type="similarity">
    <text evidence="1">Belongs to the chorismate synthase family.</text>
</comment>
<gene>
    <name evidence="1" type="primary">aroC</name>
    <name type="ordered locus">CTA_0400</name>
</gene>
<proteinExistence type="inferred from homology"/>
<keyword id="KW-0028">Amino-acid biosynthesis</keyword>
<keyword id="KW-0057">Aromatic amino acid biosynthesis</keyword>
<keyword id="KW-0274">FAD</keyword>
<keyword id="KW-0285">Flavoprotein</keyword>
<keyword id="KW-0288">FMN</keyword>
<keyword id="KW-0456">Lyase</keyword>
<keyword id="KW-0521">NADP</keyword>
<protein>
    <recommendedName>
        <fullName evidence="1">Chorismate synthase</fullName>
        <shortName evidence="1">CS</shortName>
        <ecNumber evidence="1">4.2.3.5</ecNumber>
    </recommendedName>
    <alternativeName>
        <fullName evidence="1">5-enolpyruvylshikimate-3-phosphate phospholyase</fullName>
    </alternativeName>
</protein>
<reference key="1">
    <citation type="journal article" date="2005" name="Infect. Immun.">
        <title>Comparative genomic analysis of Chlamydia trachomatis oculotropic and genitotropic strains.</title>
        <authorList>
            <person name="Carlson J.H."/>
            <person name="Porcella S.F."/>
            <person name="McClarty G."/>
            <person name="Caldwell H.D."/>
        </authorList>
    </citation>
    <scope>NUCLEOTIDE SEQUENCE [LARGE SCALE GENOMIC DNA]</scope>
    <source>
        <strain>ATCC VR-571B / DSM 19440 / HAR-13</strain>
    </source>
</reference>